<keyword id="KW-0131">Cell cycle</keyword>
<keyword id="KW-0132">Cell division</keyword>
<keyword id="KW-0137">Centromere</keyword>
<keyword id="KW-0158">Chromosome</keyword>
<keyword id="KW-0963">Cytoplasm</keyword>
<keyword id="KW-0206">Cytoskeleton</keyword>
<keyword id="KW-0995">Kinetochore</keyword>
<keyword id="KW-0493">Microtubule</keyword>
<keyword id="KW-0498">Mitosis</keyword>
<keyword id="KW-1185">Reference proteome</keyword>
<organism>
    <name type="scientific">Bos taurus</name>
    <name type="common">Bovine</name>
    <dbReference type="NCBI Taxonomy" id="9913"/>
    <lineage>
        <taxon>Eukaryota</taxon>
        <taxon>Metazoa</taxon>
        <taxon>Chordata</taxon>
        <taxon>Craniata</taxon>
        <taxon>Vertebrata</taxon>
        <taxon>Euteleostomi</taxon>
        <taxon>Mammalia</taxon>
        <taxon>Eutheria</taxon>
        <taxon>Laurasiatheria</taxon>
        <taxon>Artiodactyla</taxon>
        <taxon>Ruminantia</taxon>
        <taxon>Pecora</taxon>
        <taxon>Bovidae</taxon>
        <taxon>Bovinae</taxon>
        <taxon>Bos</taxon>
    </lineage>
</organism>
<protein>
    <recommendedName>
        <fullName evidence="3">SKA complex subunit 2</fullName>
    </recommendedName>
    <alternativeName>
        <fullName>Protein FAM33A</fullName>
    </alternativeName>
    <alternativeName>
        <fullName>Spindle and kinetochore-associated protein 2</fullName>
    </alternativeName>
</protein>
<feature type="chain" id="PRO_0000273158" description="SKA complex subunit 2">
    <location>
        <begin position="1"/>
        <end position="121"/>
    </location>
</feature>
<feature type="sequence conflict" description="In Ref. 1; AAI09480." evidence="3" ref="1">
    <original>L</original>
    <variation>M</variation>
    <location>
        <position position="98"/>
    </location>
</feature>
<sequence>MEAEVDKLELMFQKADSDLDYIQYRLEYEIKTNYPDSAGKKNPVTLLKELSAIKSRYQTLHVRFKPIAVEQKETKSRICATFNKTMTLIQELQKETDLELLPLTEEEKTAAEQLRAHMSDL</sequence>
<proteinExistence type="evidence at transcript level"/>
<comment type="function">
    <text evidence="1 2">Component of the SKA complex, a microtubule plus end-binding complex of the outer kinetochore that stabilizes spindle microtubule-kinetochore attachments, promotes alignment of chromosomes at the mitotic spindle equator (chromosome congression) and assists suppression of the spindle assembly checkpoint. Kinetochores, consisting of a centromere-associated inner segment and a microtubule-contacting outer segment, play a crucial role in chromosome segregation by mediating the physical connection between centromeric DNA and spindle microtubules. The outer kinetochore is made up of the ten-subunit KMN network complex, comprising the MIS12, NDC80 and KNL1 complexes, and auxiliary microtubule-associated components such as the SKA complex; together they connect the outer kinetochore with the inner kinetochore, bind microtubules, and mediate interactions with mitotic checkpoint proteins that delay anaphase until chromosomes are bioriented on the spindle. The SKA complex is loaded onto bioriented kinetochores and it facilitates chromosome congression by stabilizing microtubules together with MAPRE1, and end-on attachment of the NDC80 complex to depolymerizing spindle microtubules, thereby assisting the poleward-moving kinetochore in withstanding microtubule pulling forces. The complex associates with dynamic microtubule plus-ends and can track both depolymerizing and elongating microtubules. The complex recruits protein phosphatase 1 (PP1) to the kinetochore in prometaphase and metaphase, to oppose spindle assembly checkpoint signaling and promote the onset of anaphase. Binds directly to microtubules; but with a much lower affinity than SKA1 (By similarity). During meiosis the SKA complex stabilizes the meiotic spindle and is required for its migration to the cortex (By similarity).</text>
</comment>
<comment type="subunit">
    <text evidence="1">Component of the SKA complex, composed of SKA1, SKA2 and SKA3. The SKA complex is a homodimer organized around a central W-shaped coiled-coil structure, formed by the interacting domains of SKA1, SKA2, and SKA3, each end of the 'W' is extended further by the C-terminal microtubule-binding domains of SKA1 and SKA3; the complex forms extended structures on microtubules. May interact with NR3C1; the relevance of such interaction remains unclear in vivo. Interacts with the MIS12 complex subunit DSN1. Interacts with the NDC80 complex; the interaction is required to establish kinetochore-microtubule end-on attachments.</text>
</comment>
<comment type="subcellular location">
    <subcellularLocation>
        <location evidence="1">Cytoplasm</location>
        <location evidence="1">Cytoskeleton</location>
        <location evidence="1">Spindle</location>
    </subcellularLocation>
    <subcellularLocation>
        <location evidence="1">Chromosome</location>
        <location evidence="1">Centromere</location>
        <location evidence="1">Kinetochore</location>
    </subcellularLocation>
    <subcellularLocation>
        <location evidence="1">Cytoplasm</location>
        <location evidence="1">Cytoskeleton</location>
        <location evidence="1">Microtubule organizing center</location>
        <location evidence="1">Centrosome</location>
    </subcellularLocation>
    <text evidence="1 2">Localizes to bioriented kinetochores and spindle microtubules during prometaphase and metaphase in a NDC80 complex-dependent manner (By similarity). The SKA complex begins to concentrate at kinetochores before microtubule attachment but reaches maximum levels on bioriented metaphase chromosomes (By similarity). Localizes both to microtubule plus-ends and along the length of microtubules (By similarity). The localization of the SKA complex to kinetochores is positively regulated by protein serine/threonine kinase CDK1 (By similarity). The localization of the SKA complex to kinetochores is negatively regulated by protein serine/threonine kinase AURKB, and this action is opposed directly or indirectly by the PP1 and PP2A protein phosphatase complexes (By similarity). Localizes at the centrosome during interphase and prophase (By similarity). Localizes to the meiotic spindle, but not to kinetochores, from the stage of germinal vesicle breakdown (GVBD) to meiosis II (MII) (By similarity).</text>
</comment>
<comment type="similarity">
    <text evidence="3">Belongs to the SKA2 family.</text>
</comment>
<name>SKA2_BOVIN</name>
<reference key="1">
    <citation type="submission" date="2005-11" db="EMBL/GenBank/DDBJ databases">
        <authorList>
            <consortium name="NIH - Mammalian Gene Collection (MGC) project"/>
        </authorList>
    </citation>
    <scope>NUCLEOTIDE SEQUENCE [LARGE SCALE MRNA]</scope>
    <source>
        <strain>Crossbred X Angus</strain>
        <tissue>Liver</tissue>
    </source>
</reference>
<reference evidence="4" key="2">
    <citation type="submission" date="2018-03" db="EMBL/GenBank/DDBJ databases">
        <title>ARS-UCD1.2.</title>
        <authorList>
            <person name="Rosen B.D."/>
            <person name="Bickhart D.M."/>
            <person name="Koren S."/>
            <person name="Schnabel R.D."/>
            <person name="Hall R."/>
            <person name="Zimin A."/>
            <person name="Dreischer C."/>
            <person name="Schultheiss S."/>
            <person name="Schroeder S.G."/>
            <person name="Elsik C.G."/>
            <person name="Couldrey C."/>
            <person name="Liu G.E."/>
            <person name="Van Tassell C.P."/>
            <person name="Phillippy A.M."/>
            <person name="Smith T.P.L."/>
            <person name="Medrano J.F."/>
        </authorList>
    </citation>
    <scope>NUCLEOTIDE SEQUENCE [LARGE SCALE GENOMIC DNA]</scope>
    <source>
        <strain evidence="4">Hereford</strain>
    </source>
</reference>
<dbReference type="EMBL" id="BC109479">
    <property type="protein sequence ID" value="AAI09480.1"/>
    <property type="molecule type" value="mRNA"/>
</dbReference>
<dbReference type="RefSeq" id="NP_001033668.1">
    <property type="nucleotide sequence ID" value="NM_001038579.2"/>
</dbReference>
<dbReference type="SMR" id="Q2TBY0"/>
<dbReference type="FunCoup" id="Q2TBY0">
    <property type="interactions" value="1472"/>
</dbReference>
<dbReference type="STRING" id="9913.ENSBTAP00000028888"/>
<dbReference type="PaxDb" id="9913-ENSBTAP00000028888"/>
<dbReference type="GeneID" id="615847"/>
<dbReference type="KEGG" id="bta:615847"/>
<dbReference type="CTD" id="348235"/>
<dbReference type="VEuPathDB" id="HostDB:ENSBTAG00000021680"/>
<dbReference type="eggNOG" id="ENOG502S6SM">
    <property type="taxonomic scope" value="Eukaryota"/>
</dbReference>
<dbReference type="HOGENOM" id="CLU_143881_0_0_1"/>
<dbReference type="InParanoid" id="Q2TBY0"/>
<dbReference type="OrthoDB" id="193920at2759"/>
<dbReference type="TreeFam" id="TF332958"/>
<dbReference type="Reactome" id="R-BTA-141444">
    <property type="pathway name" value="Amplification of signal from unattached kinetochores via a MAD2 inhibitory signal"/>
</dbReference>
<dbReference type="Reactome" id="R-BTA-2467813">
    <property type="pathway name" value="Separation of Sister Chromatids"/>
</dbReference>
<dbReference type="Reactome" id="R-BTA-2500257">
    <property type="pathway name" value="Resolution of Sister Chromatid Cohesion"/>
</dbReference>
<dbReference type="Reactome" id="R-BTA-5663220">
    <property type="pathway name" value="RHO GTPases Activate Formins"/>
</dbReference>
<dbReference type="Reactome" id="R-BTA-68877">
    <property type="pathway name" value="Mitotic Prometaphase"/>
</dbReference>
<dbReference type="Reactome" id="R-BTA-9648025">
    <property type="pathway name" value="EML4 and NUDC in mitotic spindle formation"/>
</dbReference>
<dbReference type="Proteomes" id="UP000009136">
    <property type="component" value="Chromosome 19"/>
</dbReference>
<dbReference type="Bgee" id="ENSBTAG00000021680">
    <property type="expression patterns" value="Expressed in spermatocyte and 109 other cell types or tissues"/>
</dbReference>
<dbReference type="GO" id="GO:0005813">
    <property type="term" value="C:centrosome"/>
    <property type="evidence" value="ECO:0007669"/>
    <property type="project" value="UniProtKB-SubCell"/>
</dbReference>
<dbReference type="GO" id="GO:0005737">
    <property type="term" value="C:cytoplasm"/>
    <property type="evidence" value="ECO:0007669"/>
    <property type="project" value="UniProtKB-KW"/>
</dbReference>
<dbReference type="GO" id="GO:0072687">
    <property type="term" value="C:meiotic spindle"/>
    <property type="evidence" value="ECO:0000250"/>
    <property type="project" value="UniProtKB"/>
</dbReference>
<dbReference type="GO" id="GO:0000940">
    <property type="term" value="C:outer kinetochore"/>
    <property type="evidence" value="ECO:0000250"/>
    <property type="project" value="UniProtKB"/>
</dbReference>
<dbReference type="GO" id="GO:0005876">
    <property type="term" value="C:spindle microtubule"/>
    <property type="evidence" value="ECO:0000318"/>
    <property type="project" value="GO_Central"/>
</dbReference>
<dbReference type="GO" id="GO:0008017">
    <property type="term" value="F:microtubule binding"/>
    <property type="evidence" value="ECO:0000250"/>
    <property type="project" value="UniProtKB"/>
</dbReference>
<dbReference type="GO" id="GO:0051315">
    <property type="term" value="P:attachment of mitotic spindle microtubules to kinetochore"/>
    <property type="evidence" value="ECO:0000250"/>
    <property type="project" value="UniProtKB"/>
</dbReference>
<dbReference type="GO" id="GO:0051301">
    <property type="term" value="P:cell division"/>
    <property type="evidence" value="ECO:0007669"/>
    <property type="project" value="UniProtKB-KW"/>
</dbReference>
<dbReference type="GO" id="GO:0007059">
    <property type="term" value="P:chromosome segregation"/>
    <property type="evidence" value="ECO:0000318"/>
    <property type="project" value="GO_Central"/>
</dbReference>
<dbReference type="GO" id="GO:0051296">
    <property type="term" value="P:establishment of meiotic spindle orientation"/>
    <property type="evidence" value="ECO:0000250"/>
    <property type="project" value="UniProtKB"/>
</dbReference>
<dbReference type="GO" id="GO:0000278">
    <property type="term" value="P:mitotic cell cycle"/>
    <property type="evidence" value="ECO:0000318"/>
    <property type="project" value="GO_Central"/>
</dbReference>
<dbReference type="GO" id="GO:0007080">
    <property type="term" value="P:mitotic metaphase chromosome alignment"/>
    <property type="evidence" value="ECO:0000250"/>
    <property type="project" value="UniProtKB"/>
</dbReference>
<dbReference type="GO" id="GO:0000070">
    <property type="term" value="P:mitotic sister chromatid segregation"/>
    <property type="evidence" value="ECO:0000250"/>
    <property type="project" value="UniProtKB"/>
</dbReference>
<dbReference type="GO" id="GO:0031110">
    <property type="term" value="P:regulation of microtubule polymerization or depolymerization"/>
    <property type="evidence" value="ECO:0000250"/>
    <property type="project" value="UniProtKB"/>
</dbReference>
<dbReference type="GO" id="GO:0007056">
    <property type="term" value="P:spindle assembly involved in female meiosis"/>
    <property type="evidence" value="ECO:0000250"/>
    <property type="project" value="UniProtKB"/>
</dbReference>
<dbReference type="Gene3D" id="6.10.250.1380">
    <property type="match status" value="1"/>
</dbReference>
<dbReference type="InterPro" id="IPR026762">
    <property type="entry name" value="Ska2"/>
</dbReference>
<dbReference type="InterPro" id="IPR042091">
    <property type="entry name" value="Ska2_N"/>
</dbReference>
<dbReference type="PANTHER" id="PTHR32017">
    <property type="entry name" value="SPINDLE AND KINETOCHORE-ASSOCIATED PROTEIN 2"/>
    <property type="match status" value="1"/>
</dbReference>
<dbReference type="PANTHER" id="PTHR32017:SF3">
    <property type="entry name" value="SPINDLE AND KINETOCHORE-ASSOCIATED PROTEIN 2"/>
    <property type="match status" value="1"/>
</dbReference>
<dbReference type="Pfam" id="PF16740">
    <property type="entry name" value="SKA2"/>
    <property type="match status" value="1"/>
</dbReference>
<accession>Q2TBY0</accession>
<accession>F1MUQ7</accession>
<gene>
    <name type="primary">SKA2</name>
    <name type="synonym">FAM33A</name>
</gene>
<evidence type="ECO:0000250" key="1">
    <source>
        <dbReference type="UniProtKB" id="Q8WVK7"/>
    </source>
</evidence>
<evidence type="ECO:0000250" key="2">
    <source>
        <dbReference type="UniProtKB" id="Q9CR46"/>
    </source>
</evidence>
<evidence type="ECO:0000305" key="3"/>
<evidence type="ECO:0000312" key="4">
    <source>
        <dbReference type="Proteomes" id="UP000009136"/>
    </source>
</evidence>